<protein>
    <recommendedName>
        <fullName evidence="1">Small ribosomal subunit protein eS28</fullName>
    </recommendedName>
    <alternativeName>
        <fullName evidence="2">30S ribosomal protein S28e</fullName>
    </alternativeName>
</protein>
<accession>B1Y9V2</accession>
<feature type="chain" id="PRO_1000115087" description="Small ribosomal subunit protein eS28">
    <location>
        <begin position="1"/>
        <end position="77"/>
    </location>
</feature>
<comment type="similarity">
    <text evidence="1">Belongs to the eukaryotic ribosomal protein eS28 family.</text>
</comment>
<dbReference type="EMBL" id="CP001014">
    <property type="protein sequence ID" value="ACB40502.1"/>
    <property type="molecule type" value="Genomic_DNA"/>
</dbReference>
<dbReference type="RefSeq" id="WP_012350921.1">
    <property type="nucleotide sequence ID" value="NC_010525.1"/>
</dbReference>
<dbReference type="PDB" id="9E7F">
    <property type="method" value="EM"/>
    <property type="resolution" value="2.53 A"/>
    <property type="chains" value="BZ=1-77"/>
</dbReference>
<dbReference type="PDBsum" id="9E7F"/>
<dbReference type="EMDB" id="EMD-47668"/>
<dbReference type="SMR" id="B1Y9V2"/>
<dbReference type="STRING" id="444157.Tneu_1578"/>
<dbReference type="GeneID" id="6166088"/>
<dbReference type="KEGG" id="tne:Tneu_1578"/>
<dbReference type="eggNOG" id="arCOG04314">
    <property type="taxonomic scope" value="Archaea"/>
</dbReference>
<dbReference type="HOGENOM" id="CLU_178987_2_1_2"/>
<dbReference type="OrthoDB" id="7620at2157"/>
<dbReference type="Proteomes" id="UP000001694">
    <property type="component" value="Chromosome"/>
</dbReference>
<dbReference type="GO" id="GO:0022627">
    <property type="term" value="C:cytosolic small ribosomal subunit"/>
    <property type="evidence" value="ECO:0007669"/>
    <property type="project" value="TreeGrafter"/>
</dbReference>
<dbReference type="GO" id="GO:0003735">
    <property type="term" value="F:structural constituent of ribosome"/>
    <property type="evidence" value="ECO:0007669"/>
    <property type="project" value="InterPro"/>
</dbReference>
<dbReference type="GO" id="GO:0030490">
    <property type="term" value="P:maturation of SSU-rRNA"/>
    <property type="evidence" value="ECO:0007669"/>
    <property type="project" value="TreeGrafter"/>
</dbReference>
<dbReference type="GO" id="GO:0000028">
    <property type="term" value="P:ribosomal small subunit assembly"/>
    <property type="evidence" value="ECO:0007669"/>
    <property type="project" value="TreeGrafter"/>
</dbReference>
<dbReference type="GO" id="GO:0006412">
    <property type="term" value="P:translation"/>
    <property type="evidence" value="ECO:0007669"/>
    <property type="project" value="UniProtKB-UniRule"/>
</dbReference>
<dbReference type="CDD" id="cd04457">
    <property type="entry name" value="S1_S28E"/>
    <property type="match status" value="1"/>
</dbReference>
<dbReference type="FunFam" id="2.40.50.140:FF:000145">
    <property type="entry name" value="30S ribosomal protein S28e"/>
    <property type="match status" value="1"/>
</dbReference>
<dbReference type="Gene3D" id="2.40.50.140">
    <property type="entry name" value="Nucleic acid-binding proteins"/>
    <property type="match status" value="1"/>
</dbReference>
<dbReference type="HAMAP" id="MF_00292">
    <property type="entry name" value="Ribosomal_eS28"/>
    <property type="match status" value="1"/>
</dbReference>
<dbReference type="InterPro" id="IPR012340">
    <property type="entry name" value="NA-bd_OB-fold"/>
</dbReference>
<dbReference type="InterPro" id="IPR000289">
    <property type="entry name" value="Ribosomal_eS28"/>
</dbReference>
<dbReference type="InterPro" id="IPR028626">
    <property type="entry name" value="Ribosomal_eS28_CS"/>
</dbReference>
<dbReference type="NCBIfam" id="NF003080">
    <property type="entry name" value="PRK04007.1"/>
    <property type="match status" value="1"/>
</dbReference>
<dbReference type="PANTHER" id="PTHR10769">
    <property type="entry name" value="40S RIBOSOMAL PROTEIN S28"/>
    <property type="match status" value="1"/>
</dbReference>
<dbReference type="PANTHER" id="PTHR10769:SF3">
    <property type="entry name" value="SMALL RIBOSOMAL SUBUNIT PROTEIN ES28"/>
    <property type="match status" value="1"/>
</dbReference>
<dbReference type="Pfam" id="PF01200">
    <property type="entry name" value="Ribosomal_S28e"/>
    <property type="match status" value="1"/>
</dbReference>
<dbReference type="SUPFAM" id="SSF50249">
    <property type="entry name" value="Nucleic acid-binding proteins"/>
    <property type="match status" value="1"/>
</dbReference>
<dbReference type="PROSITE" id="PS00961">
    <property type="entry name" value="RIBOSOMAL_S28E"/>
    <property type="match status" value="1"/>
</dbReference>
<evidence type="ECO:0000255" key="1">
    <source>
        <dbReference type="HAMAP-Rule" id="MF_00292"/>
    </source>
</evidence>
<evidence type="ECO:0000305" key="2"/>
<sequence length="77" mass="8533">MAEEVKFSPYEDAVAGLVVQILGRTGVAGEVTQVKIKVLEGRDKGRVLTRNVKGPVRLGDIVMLRETEREARRITAR</sequence>
<gene>
    <name evidence="1" type="primary">rps28e</name>
    <name type="ordered locus">Tneu_1578</name>
</gene>
<keyword id="KW-0002">3D-structure</keyword>
<keyword id="KW-0687">Ribonucleoprotein</keyword>
<keyword id="KW-0689">Ribosomal protein</keyword>
<organism>
    <name type="scientific">Pyrobaculum neutrophilum (strain DSM 2338 / JCM 9278 / NBRC 100436 / V24Sta)</name>
    <name type="common">Thermoproteus neutrophilus</name>
    <dbReference type="NCBI Taxonomy" id="444157"/>
    <lineage>
        <taxon>Archaea</taxon>
        <taxon>Thermoproteota</taxon>
        <taxon>Thermoprotei</taxon>
        <taxon>Thermoproteales</taxon>
        <taxon>Thermoproteaceae</taxon>
        <taxon>Pyrobaculum</taxon>
    </lineage>
</organism>
<name>RS28_PYRNV</name>
<reference key="1">
    <citation type="submission" date="2008-03" db="EMBL/GenBank/DDBJ databases">
        <title>Complete sequence of Thermoproteus neutrophilus V24Sta.</title>
        <authorList>
            <consortium name="US DOE Joint Genome Institute"/>
            <person name="Copeland A."/>
            <person name="Lucas S."/>
            <person name="Lapidus A."/>
            <person name="Glavina del Rio T."/>
            <person name="Dalin E."/>
            <person name="Tice H."/>
            <person name="Bruce D."/>
            <person name="Goodwin L."/>
            <person name="Pitluck S."/>
            <person name="Sims D."/>
            <person name="Brettin T."/>
            <person name="Detter J.C."/>
            <person name="Han C."/>
            <person name="Kuske C.R."/>
            <person name="Schmutz J."/>
            <person name="Larimer F."/>
            <person name="Land M."/>
            <person name="Hauser L."/>
            <person name="Kyrpides N."/>
            <person name="Mikhailova N."/>
            <person name="Biddle J.F."/>
            <person name="Zhang Z."/>
            <person name="Fitz-Gibbon S.T."/>
            <person name="Lowe T.M."/>
            <person name="Saltikov C."/>
            <person name="House C.H."/>
            <person name="Richardson P."/>
        </authorList>
    </citation>
    <scope>NUCLEOTIDE SEQUENCE [LARGE SCALE GENOMIC DNA]</scope>
    <source>
        <strain>DSM 2338 / JCM 9278 / NBRC 100436 / V24Sta</strain>
    </source>
</reference>
<proteinExistence type="evidence at protein level"/>